<keyword id="KW-0150">Chloroplast</keyword>
<keyword id="KW-0934">Plastid</keyword>
<keyword id="KW-0687">Ribonucleoprotein</keyword>
<keyword id="KW-0689">Ribosomal protein</keyword>
<name>RR16_SACOF</name>
<proteinExistence type="inferred from homology"/>
<feature type="chain" id="PRO_0000167317" description="Small ribosomal subunit protein bS16c">
    <location>
        <begin position="1"/>
        <end position="85"/>
    </location>
</feature>
<gene>
    <name evidence="1" type="primary">rps16</name>
</gene>
<organism>
    <name type="scientific">Saccharum officinarum</name>
    <name type="common">Sugarcane</name>
    <dbReference type="NCBI Taxonomy" id="4547"/>
    <lineage>
        <taxon>Eukaryota</taxon>
        <taxon>Viridiplantae</taxon>
        <taxon>Streptophyta</taxon>
        <taxon>Embryophyta</taxon>
        <taxon>Tracheophyta</taxon>
        <taxon>Spermatophyta</taxon>
        <taxon>Magnoliopsida</taxon>
        <taxon>Liliopsida</taxon>
        <taxon>Poales</taxon>
        <taxon>Poaceae</taxon>
        <taxon>PACMAD clade</taxon>
        <taxon>Panicoideae</taxon>
        <taxon>Andropogonodae</taxon>
        <taxon>Andropogoneae</taxon>
        <taxon>Saccharinae</taxon>
        <taxon>Saccharum</taxon>
        <taxon>Saccharum officinarum species complex</taxon>
    </lineage>
</organism>
<sequence length="85" mass="10090">MVKLRLKRCGRKQQAIYRIVAIDVRSRREGRDLRKVGFYDPIKNQTCLNVPAILYFLEKGAQPTRTVYDILRKAEFFKDKERTLS</sequence>
<protein>
    <recommendedName>
        <fullName evidence="1">Small ribosomal subunit protein bS16c</fullName>
    </recommendedName>
    <alternativeName>
        <fullName evidence="2">30S ribosomal protein S16, chloroplastic</fullName>
    </alternativeName>
</protein>
<reference key="1">
    <citation type="journal article" date="2004" name="DNA Res.">
        <title>Complete nucleotide sequence of the sugarcane (Saccharum officinarum) chloroplast genome: a comparative analysis of four monocot chloroplast genomes.</title>
        <authorList>
            <person name="Asano T."/>
            <person name="Tsudzuki T."/>
            <person name="Takahashi S."/>
            <person name="Shimada H."/>
            <person name="Kadowaki K."/>
        </authorList>
    </citation>
    <scope>NUCLEOTIDE SEQUENCE [LARGE SCALE GENOMIC DNA]</scope>
</reference>
<dbReference type="EMBL" id="AP006714">
    <property type="protein sequence ID" value="BAD27272.1"/>
    <property type="molecule type" value="Genomic_DNA"/>
</dbReference>
<dbReference type="SMR" id="Q6ENY4"/>
<dbReference type="GO" id="GO:0009507">
    <property type="term" value="C:chloroplast"/>
    <property type="evidence" value="ECO:0007669"/>
    <property type="project" value="UniProtKB-SubCell"/>
</dbReference>
<dbReference type="GO" id="GO:0005739">
    <property type="term" value="C:mitochondrion"/>
    <property type="evidence" value="ECO:0007669"/>
    <property type="project" value="GOC"/>
</dbReference>
<dbReference type="GO" id="GO:0015935">
    <property type="term" value="C:small ribosomal subunit"/>
    <property type="evidence" value="ECO:0007669"/>
    <property type="project" value="TreeGrafter"/>
</dbReference>
<dbReference type="GO" id="GO:0003735">
    <property type="term" value="F:structural constituent of ribosome"/>
    <property type="evidence" value="ECO:0007669"/>
    <property type="project" value="InterPro"/>
</dbReference>
<dbReference type="GO" id="GO:0032543">
    <property type="term" value="P:mitochondrial translation"/>
    <property type="evidence" value="ECO:0007669"/>
    <property type="project" value="TreeGrafter"/>
</dbReference>
<dbReference type="FunFam" id="3.30.1320.10:FF:000003">
    <property type="entry name" value="30S ribosomal protein S16, chloroplastic"/>
    <property type="match status" value="1"/>
</dbReference>
<dbReference type="Gene3D" id="3.30.1320.10">
    <property type="match status" value="1"/>
</dbReference>
<dbReference type="HAMAP" id="MF_00385">
    <property type="entry name" value="Ribosomal_bS16"/>
    <property type="match status" value="1"/>
</dbReference>
<dbReference type="InterPro" id="IPR000307">
    <property type="entry name" value="Ribosomal_bS16"/>
</dbReference>
<dbReference type="InterPro" id="IPR020592">
    <property type="entry name" value="Ribosomal_bS16_CS"/>
</dbReference>
<dbReference type="InterPro" id="IPR023803">
    <property type="entry name" value="Ribosomal_bS16_dom_sf"/>
</dbReference>
<dbReference type="NCBIfam" id="TIGR00002">
    <property type="entry name" value="S16"/>
    <property type="match status" value="1"/>
</dbReference>
<dbReference type="PANTHER" id="PTHR12919">
    <property type="entry name" value="30S RIBOSOMAL PROTEIN S16"/>
    <property type="match status" value="1"/>
</dbReference>
<dbReference type="PANTHER" id="PTHR12919:SF20">
    <property type="entry name" value="SMALL RIBOSOMAL SUBUNIT PROTEIN BS16M"/>
    <property type="match status" value="1"/>
</dbReference>
<dbReference type="Pfam" id="PF00886">
    <property type="entry name" value="Ribosomal_S16"/>
    <property type="match status" value="1"/>
</dbReference>
<dbReference type="SUPFAM" id="SSF54565">
    <property type="entry name" value="Ribosomal protein S16"/>
    <property type="match status" value="1"/>
</dbReference>
<dbReference type="PROSITE" id="PS00732">
    <property type="entry name" value="RIBOSOMAL_S16"/>
    <property type="match status" value="1"/>
</dbReference>
<comment type="subcellular location">
    <subcellularLocation>
        <location>Plastid</location>
        <location>Chloroplast</location>
    </subcellularLocation>
</comment>
<comment type="similarity">
    <text evidence="1">Belongs to the bacterial ribosomal protein bS16 family.</text>
</comment>
<evidence type="ECO:0000255" key="1">
    <source>
        <dbReference type="HAMAP-Rule" id="MF_00385"/>
    </source>
</evidence>
<evidence type="ECO:0000305" key="2"/>
<geneLocation type="chloroplast"/>
<accession>Q6ENY4</accession>